<keyword id="KW-0963">Cytoplasm</keyword>
<keyword id="KW-0324">Glycolysis</keyword>
<keyword id="KW-1032">Host cell membrane</keyword>
<keyword id="KW-1043">Host membrane</keyword>
<keyword id="KW-0456">Lyase</keyword>
<keyword id="KW-0472">Membrane</keyword>
<keyword id="KW-1185">Reference proteome</keyword>
<keyword id="KW-0704">Schiff base</keyword>
<protein>
    <recommendedName>
        <fullName>Fructose-bisphosphate aldolase 2</fullName>
        <shortName evidence="6">ALDO-2</shortName>
        <ecNumber evidence="5">4.1.2.13</ecNumber>
    </recommendedName>
</protein>
<reference key="1">
    <citation type="journal article" date="1994" name="Mol. Biochem. Parasitol.">
        <title>Regular initiation of translation of Plasmodium berghei aldolase-2 after pre-mRNA splicing.</title>
        <authorList>
            <person name="Certa U."/>
        </authorList>
    </citation>
    <scope>NUCLEOTIDE SEQUENCE [GENOMIC DNA]</scope>
</reference>
<reference evidence="8" key="2">
    <citation type="journal article" date="2014" name="BMC Biol.">
        <title>A comprehensive evaluation of rodent malaria parasite genomes and gene expression.</title>
        <authorList>
            <person name="Otto T.D."/>
            <person name="Bohme U."/>
            <person name="Jackson A.P."/>
            <person name="Hunt M."/>
            <person name="Franke-Fayard B."/>
            <person name="Hoeijmakers W.A."/>
            <person name="Religa A.A."/>
            <person name="Robertson L."/>
            <person name="Sanders M."/>
            <person name="Ogun S.A."/>
            <person name="Cunningham D."/>
            <person name="Erhart A."/>
            <person name="Billker O."/>
            <person name="Khan S.M."/>
            <person name="Stunnenberg H.G."/>
            <person name="Langhorne J."/>
            <person name="Holder A.A."/>
            <person name="Waters A.P."/>
            <person name="Newbold C.I."/>
            <person name="Pain A."/>
            <person name="Berriman M."/>
            <person name="Janse C.J."/>
        </authorList>
    </citation>
    <scope>NUCLEOTIDE SEQUENCE [LARGE SCALE GENOMIC DNA]</scope>
    <source>
        <strain evidence="8">ANKA</strain>
    </source>
</reference>
<reference key="3">
    <citation type="journal article" date="1992" name="Mol. Biochem. Parasitol.">
        <title>Stage-specific expression of aldolase isoenzymes in the rodent malaria parasite Plasmodium berghei.</title>
        <authorList>
            <person name="Meier B."/>
            <person name="Doebeli H."/>
            <person name="Certa U."/>
        </authorList>
    </citation>
    <scope>FUNCTION</scope>
    <scope>CATALYTIC ACTIVITY</scope>
    <scope>BIOPHYSICOCHEMICAL PROPERTIES</scope>
    <scope>DEVELOPMENTAL STAGE</scope>
</reference>
<evidence type="ECO:0000250" key="1">
    <source>
        <dbReference type="UniProtKB" id="P00883"/>
    </source>
</evidence>
<evidence type="ECO:0000250" key="2">
    <source>
        <dbReference type="UniProtKB" id="P14223"/>
    </source>
</evidence>
<evidence type="ECO:0000250" key="3">
    <source>
        <dbReference type="UniProtKB" id="Q27744"/>
    </source>
</evidence>
<evidence type="ECO:0000250" key="4">
    <source>
        <dbReference type="UniProtKB" id="Q8I8I2"/>
    </source>
</evidence>
<evidence type="ECO:0000269" key="5">
    <source>
    </source>
</evidence>
<evidence type="ECO:0000303" key="6">
    <source>
    </source>
</evidence>
<evidence type="ECO:0000305" key="7"/>
<evidence type="ECO:0000312" key="8">
    <source>
        <dbReference type="Proteomes" id="UP000074855"/>
    </source>
</evidence>
<name>ALF2_PLABA</name>
<sequence>MVGCAEYKNAPMKLPKEVAQELAETAKKLVAAGKGILAADESTQTIKKRFDNIKIENTVENRASYRDLLFGTKGLGKFISGAILFEETLFQKNEAGVPLVNLLHDEGIIPGIKVDKGLVSIPCTDDEKSTQGLDGLAERCKEYYKAGARFAKWRAVLVIDPAKGKPTDLSIQEVSWGLARYASICQQNKLVPIVEPEILADGAHTIEVCATVTQKVLASVFKALHDNGVLLEGALLKPNMVTAGYDCTEKTKTDDIGFFTVRTLRRTVPPALPGVVFLSGGQSEEDASINLNSINVLGPHPWALTFSYGRALQASVLNTWQGKKENVAKARAVLLQRAEANSLATYGKYKGGAGGSTAGASLYEKKYVY</sequence>
<comment type="function">
    <text evidence="5">Plays a key role in glycolysis by catalyzing the cleavage of fructose 1,6-bisphosphate into dihydroxyacetone phosphate and glyceraldehyde 3-phosphate.</text>
</comment>
<comment type="catalytic activity">
    <reaction evidence="5">
        <text>beta-D-fructose 1,6-bisphosphate = D-glyceraldehyde 3-phosphate + dihydroxyacetone phosphate</text>
        <dbReference type="Rhea" id="RHEA:14729"/>
        <dbReference type="ChEBI" id="CHEBI:32966"/>
        <dbReference type="ChEBI" id="CHEBI:57642"/>
        <dbReference type="ChEBI" id="CHEBI:59776"/>
        <dbReference type="EC" id="4.1.2.13"/>
    </reaction>
</comment>
<comment type="biophysicochemical properties">
    <kinetics>
        <KM evidence="5">5 mM for fructose-1-phosphate</KM>
        <KM evidence="5">6 uM for fructose-1,6-bisphosphate</KM>
        <text evidence="5">kcat is 66 min(-1) with fructose-1-phosphate as substrate (PubMed:1625704). kcat is 164 min(-1) with fructose-1,6- bisphosphate as substrate (PubMed:1625704).</text>
    </kinetics>
</comment>
<comment type="pathway">
    <text evidence="7">Carbohydrate degradation; glycolysis; D-glyceraldehyde 3-phosphate and glycerone phosphate from D-glucose: step 4/4.</text>
</comment>
<comment type="subcellular location">
    <subcellularLocation>
        <location evidence="2">Cytoplasm</location>
    </subcellularLocation>
    <subcellularLocation>
        <location evidence="2">Membrane</location>
        <topology evidence="2">Peripheral membrane protein</topology>
    </subcellularLocation>
    <subcellularLocation>
        <location evidence="3">Host cell membrane</location>
        <topology evidence="3">Peripheral membrane protein</topology>
    </subcellularLocation>
</comment>
<comment type="developmental stage">
    <text evidence="5">Expressed in blood stage forms (at protein level).</text>
</comment>
<comment type="similarity">
    <text evidence="7">Belongs to the class I fructose-bisphosphate aldolase family.</text>
</comment>
<comment type="sequence caution" evidence="7">
    <conflict type="erroneous initiation">
        <sequence resource="EMBL-CDS" id="AAC37203"/>
    </conflict>
    <text>Truncated N-terminus.</text>
</comment>
<accession>P49577</accession>
<accession>A0A509APH7</accession>
<organism>
    <name type="scientific">Plasmodium berghei (strain Anka)</name>
    <dbReference type="NCBI Taxonomy" id="5823"/>
    <lineage>
        <taxon>Eukaryota</taxon>
        <taxon>Sar</taxon>
        <taxon>Alveolata</taxon>
        <taxon>Apicomplexa</taxon>
        <taxon>Aconoidasida</taxon>
        <taxon>Haemosporida</taxon>
        <taxon>Plasmodiidae</taxon>
        <taxon>Plasmodium</taxon>
        <taxon>Plasmodium (Vinckeia)</taxon>
    </lineage>
</organism>
<proteinExistence type="evidence at protein level"/>
<dbReference type="EC" id="4.1.2.13" evidence="5"/>
<dbReference type="EMBL" id="M81793">
    <property type="protein sequence ID" value="AAC37203.1"/>
    <property type="status" value="ALT_SEQ"/>
    <property type="molecule type" value="Unassigned_DNA"/>
</dbReference>
<dbReference type="EMBL" id="LK023128">
    <property type="protein sequence ID" value="VUC57468.1"/>
    <property type="molecule type" value="Genomic_DNA"/>
</dbReference>
<dbReference type="SMR" id="P49577"/>
<dbReference type="MoonProt" id="P49577"/>
<dbReference type="VEuPathDB" id="PlasmoDB:PBANKA_1308600"/>
<dbReference type="eggNOG" id="KOG1557">
    <property type="taxonomic scope" value="Eukaryota"/>
</dbReference>
<dbReference type="InParanoid" id="A0A509APH7"/>
<dbReference type="OMA" id="WRAVITI"/>
<dbReference type="UniPathway" id="UPA00109">
    <property type="reaction ID" value="UER00183"/>
</dbReference>
<dbReference type="Proteomes" id="UP000074855">
    <property type="component" value="Chromosome 13"/>
</dbReference>
<dbReference type="GO" id="GO:0005737">
    <property type="term" value="C:cytoplasm"/>
    <property type="evidence" value="ECO:0007669"/>
    <property type="project" value="UniProtKB-SubCell"/>
</dbReference>
<dbReference type="GO" id="GO:0020002">
    <property type="term" value="C:host cell plasma membrane"/>
    <property type="evidence" value="ECO:0007669"/>
    <property type="project" value="UniProtKB-SubCell"/>
</dbReference>
<dbReference type="GO" id="GO:0016020">
    <property type="term" value="C:membrane"/>
    <property type="evidence" value="ECO:0007669"/>
    <property type="project" value="UniProtKB-SubCell"/>
</dbReference>
<dbReference type="GO" id="GO:0004332">
    <property type="term" value="F:fructose-bisphosphate aldolase activity"/>
    <property type="evidence" value="ECO:0007669"/>
    <property type="project" value="UniProtKB-EC"/>
</dbReference>
<dbReference type="GO" id="GO:0006096">
    <property type="term" value="P:glycolytic process"/>
    <property type="evidence" value="ECO:0007669"/>
    <property type="project" value="UniProtKB-UniPathway"/>
</dbReference>
<dbReference type="CDD" id="cd00948">
    <property type="entry name" value="FBP_aldolase_I_a"/>
    <property type="match status" value="1"/>
</dbReference>
<dbReference type="FunFam" id="3.20.20.70:FF:000187">
    <property type="entry name" value="Fructose-bisphosphate aldolase"/>
    <property type="match status" value="1"/>
</dbReference>
<dbReference type="Gene3D" id="3.20.20.70">
    <property type="entry name" value="Aldolase class I"/>
    <property type="match status" value="1"/>
</dbReference>
<dbReference type="InterPro" id="IPR029768">
    <property type="entry name" value="Aldolase_I_AS"/>
</dbReference>
<dbReference type="InterPro" id="IPR013785">
    <property type="entry name" value="Aldolase_TIM"/>
</dbReference>
<dbReference type="InterPro" id="IPR000741">
    <property type="entry name" value="FBA_I"/>
</dbReference>
<dbReference type="NCBIfam" id="NF033379">
    <property type="entry name" value="FrucBisAld_I"/>
    <property type="match status" value="1"/>
</dbReference>
<dbReference type="PANTHER" id="PTHR11627">
    <property type="entry name" value="FRUCTOSE-BISPHOSPHATE ALDOLASE"/>
    <property type="match status" value="1"/>
</dbReference>
<dbReference type="Pfam" id="PF00274">
    <property type="entry name" value="Glycolytic"/>
    <property type="match status" value="1"/>
</dbReference>
<dbReference type="SUPFAM" id="SSF51569">
    <property type="entry name" value="Aldolase"/>
    <property type="match status" value="1"/>
</dbReference>
<dbReference type="PROSITE" id="PS00158">
    <property type="entry name" value="ALDOLASE_CLASS_I"/>
    <property type="match status" value="1"/>
</dbReference>
<feature type="chain" id="PRO_0000216931" description="Fructose-bisphosphate aldolase 2">
    <location>
        <begin position="1"/>
        <end position="369"/>
    </location>
</feature>
<feature type="active site" description="Proton acceptor" evidence="4">
    <location>
        <position position="195"/>
    </location>
</feature>
<feature type="active site" description="Schiff-base intermediate with dihydroxyacetone phosphate" evidence="4">
    <location>
        <position position="237"/>
    </location>
</feature>
<feature type="binding site" evidence="4">
    <location>
        <position position="40"/>
    </location>
    <ligand>
        <name>dihydroxyacetone phosphate</name>
        <dbReference type="ChEBI" id="CHEBI:57642"/>
    </ligand>
</feature>
<feature type="binding site" evidence="4">
    <location>
        <position position="42"/>
    </location>
    <ligand>
        <name>D-glyceraldehyde 3-phosphate</name>
        <dbReference type="ChEBI" id="CHEBI:59776"/>
    </ligand>
</feature>
<feature type="binding site" evidence="4">
    <location>
        <position position="45"/>
    </location>
    <ligand>
        <name>D-glyceraldehyde 3-phosphate</name>
        <dbReference type="ChEBI" id="CHEBI:59776"/>
    </ligand>
</feature>
<feature type="binding site" evidence="1">
    <location>
        <position position="49"/>
    </location>
    <ligand>
        <name>beta-D-fructose 1,6-bisphosphate</name>
        <dbReference type="ChEBI" id="CHEBI:32966"/>
    </ligand>
</feature>
<feature type="binding site" evidence="4">
    <location>
        <position position="113"/>
    </location>
    <ligand>
        <name>D-glyceraldehyde 3-phosphate</name>
        <dbReference type="ChEBI" id="CHEBI:59776"/>
    </ligand>
</feature>
<feature type="binding site" evidence="4">
    <location>
        <position position="152"/>
    </location>
    <ligand>
        <name>dihydroxyacetone phosphate</name>
        <dbReference type="ChEBI" id="CHEBI:57642"/>
    </ligand>
</feature>
<feature type="binding site" evidence="4">
    <location>
        <position position="195"/>
    </location>
    <ligand>
        <name>D-glyceraldehyde 3-phosphate</name>
        <dbReference type="ChEBI" id="CHEBI:59776"/>
    </ligand>
</feature>
<feature type="binding site" evidence="4">
    <location>
        <position position="237"/>
    </location>
    <ligand>
        <name>dihydroxyacetone phosphate</name>
        <dbReference type="ChEBI" id="CHEBI:57642"/>
    </ligand>
</feature>
<feature type="binding site" evidence="1">
    <location>
        <begin position="279"/>
        <end position="281"/>
    </location>
    <ligand>
        <name>beta-D-fructose 1,6-bisphosphate</name>
        <dbReference type="ChEBI" id="CHEBI:32966"/>
    </ligand>
</feature>
<feature type="binding site" evidence="4">
    <location>
        <position position="279"/>
    </location>
    <ligand>
        <name>dihydroxyacetone phosphate</name>
        <dbReference type="ChEBI" id="CHEBI:57642"/>
    </ligand>
</feature>
<feature type="binding site" evidence="4">
    <location>
        <position position="280"/>
    </location>
    <ligand>
        <name>dihydroxyacetone phosphate</name>
        <dbReference type="ChEBI" id="CHEBI:57642"/>
    </ligand>
</feature>
<feature type="binding site" evidence="1">
    <location>
        <position position="307"/>
    </location>
    <ligand>
        <name>beta-D-fructose 1,6-bisphosphate</name>
        <dbReference type="ChEBI" id="CHEBI:32966"/>
    </ligand>
</feature>
<feature type="binding site" evidence="4">
    <location>
        <position position="309"/>
    </location>
    <ligand>
        <name>dihydroxyacetone phosphate</name>
        <dbReference type="ChEBI" id="CHEBI:57642"/>
    </ligand>
</feature>
<feature type="binding site" evidence="1">
    <location>
        <position position="310"/>
    </location>
    <ligand>
        <name>beta-D-fructose 1,6-bisphosphate</name>
        <dbReference type="ChEBI" id="CHEBI:32966"/>
    </ligand>
</feature>
<feature type="binding site" evidence="4">
    <location>
        <position position="310"/>
    </location>
    <ligand>
        <name>dihydroxyacetone phosphate</name>
        <dbReference type="ChEBI" id="CHEBI:57642"/>
    </ligand>
</feature>
<feature type="site" description="Necessary for preference for fructose 1,6-bisphosphate over fructose 1-phosphate" evidence="1">
    <location>
        <position position="369"/>
    </location>
</feature>
<feature type="sequence conflict" description="In Ref. 1; AAC37203." evidence="7" ref="1">
    <original>V</original>
    <variation>D</variation>
    <location>
        <position position="18"/>
    </location>
</feature>
<feature type="sequence conflict" description="In Ref. 1; AAC37203." evidence="7" ref="1">
    <original>E</original>
    <variation>Q</variation>
    <location>
        <position position="60"/>
    </location>
</feature>
<feature type="sequence conflict" description="In Ref. 1; AAC37203." evidence="7" ref="1">
    <original>L</original>
    <variation>S</variation>
    <location>
        <position position="235"/>
    </location>
</feature>
<feature type="sequence conflict" description="In Ref. 1; AAC37203." evidence="7" ref="1">
    <original>V</original>
    <variation>A</variation>
    <location>
        <position position="276"/>
    </location>
</feature>
<feature type="sequence conflict" description="In Ref. 1; AAC37203." evidence="7" ref="1">
    <original>A</original>
    <variation>R</variation>
    <location>
        <position position="332"/>
    </location>
</feature>
<gene>
    <name type="primary">ALDO2</name>
</gene>